<comment type="function">
    <text evidence="1">Catalyzes the phosphorolysis of diverse nucleosides, yielding D-ribose 1-phosphate and the respective free bases. Can use uridine, adenosine, guanosine, cytidine, thymidine, inosine and xanthosine as substrates. Also catalyzes the reverse reactions.</text>
</comment>
<comment type="catalytic activity">
    <reaction evidence="1">
        <text>a purine D-ribonucleoside + phosphate = a purine nucleobase + alpha-D-ribose 1-phosphate</text>
        <dbReference type="Rhea" id="RHEA:19805"/>
        <dbReference type="ChEBI" id="CHEBI:26386"/>
        <dbReference type="ChEBI" id="CHEBI:43474"/>
        <dbReference type="ChEBI" id="CHEBI:57720"/>
        <dbReference type="ChEBI" id="CHEBI:142355"/>
        <dbReference type="EC" id="2.4.2.1"/>
    </reaction>
</comment>
<comment type="catalytic activity">
    <reaction evidence="1">
        <text>adenosine + phosphate = alpha-D-ribose 1-phosphate + adenine</text>
        <dbReference type="Rhea" id="RHEA:27642"/>
        <dbReference type="ChEBI" id="CHEBI:16335"/>
        <dbReference type="ChEBI" id="CHEBI:16708"/>
        <dbReference type="ChEBI" id="CHEBI:43474"/>
        <dbReference type="ChEBI" id="CHEBI:57720"/>
        <dbReference type="EC" id="2.4.2.1"/>
    </reaction>
</comment>
<comment type="catalytic activity">
    <reaction evidence="1">
        <text>cytidine + phosphate = cytosine + alpha-D-ribose 1-phosphate</text>
        <dbReference type="Rhea" id="RHEA:52540"/>
        <dbReference type="ChEBI" id="CHEBI:16040"/>
        <dbReference type="ChEBI" id="CHEBI:17562"/>
        <dbReference type="ChEBI" id="CHEBI:43474"/>
        <dbReference type="ChEBI" id="CHEBI:57720"/>
        <dbReference type="EC" id="2.4.2.2"/>
    </reaction>
</comment>
<comment type="catalytic activity">
    <reaction evidence="1">
        <text>guanosine + phosphate = alpha-D-ribose 1-phosphate + guanine</text>
        <dbReference type="Rhea" id="RHEA:13233"/>
        <dbReference type="ChEBI" id="CHEBI:16235"/>
        <dbReference type="ChEBI" id="CHEBI:16750"/>
        <dbReference type="ChEBI" id="CHEBI:43474"/>
        <dbReference type="ChEBI" id="CHEBI:57720"/>
        <dbReference type="EC" id="2.4.2.1"/>
    </reaction>
</comment>
<comment type="catalytic activity">
    <reaction evidence="1">
        <text>inosine + phosphate = alpha-D-ribose 1-phosphate + hypoxanthine</text>
        <dbReference type="Rhea" id="RHEA:27646"/>
        <dbReference type="ChEBI" id="CHEBI:17368"/>
        <dbReference type="ChEBI" id="CHEBI:17596"/>
        <dbReference type="ChEBI" id="CHEBI:43474"/>
        <dbReference type="ChEBI" id="CHEBI:57720"/>
        <dbReference type="EC" id="2.4.2.1"/>
    </reaction>
</comment>
<comment type="catalytic activity">
    <reaction evidence="1">
        <text>thymidine + phosphate = 2-deoxy-alpha-D-ribose 1-phosphate + thymine</text>
        <dbReference type="Rhea" id="RHEA:16037"/>
        <dbReference type="ChEBI" id="CHEBI:17748"/>
        <dbReference type="ChEBI" id="CHEBI:17821"/>
        <dbReference type="ChEBI" id="CHEBI:43474"/>
        <dbReference type="ChEBI" id="CHEBI:57259"/>
        <dbReference type="EC" id="2.4.2.2"/>
    </reaction>
</comment>
<comment type="catalytic activity">
    <reaction evidence="1">
        <text>uridine + phosphate = alpha-D-ribose 1-phosphate + uracil</text>
        <dbReference type="Rhea" id="RHEA:24388"/>
        <dbReference type="ChEBI" id="CHEBI:16704"/>
        <dbReference type="ChEBI" id="CHEBI:17568"/>
        <dbReference type="ChEBI" id="CHEBI:43474"/>
        <dbReference type="ChEBI" id="CHEBI:57720"/>
        <dbReference type="EC" id="2.4.2.2"/>
    </reaction>
</comment>
<comment type="catalytic activity">
    <reaction evidence="1">
        <text>xanthosine + phosphate = alpha-D-ribose 1-phosphate + xanthine</text>
        <dbReference type="Rhea" id="RHEA:27638"/>
        <dbReference type="ChEBI" id="CHEBI:17712"/>
        <dbReference type="ChEBI" id="CHEBI:18107"/>
        <dbReference type="ChEBI" id="CHEBI:43474"/>
        <dbReference type="ChEBI" id="CHEBI:57720"/>
        <dbReference type="EC" id="2.4.2.1"/>
    </reaction>
</comment>
<comment type="similarity">
    <text evidence="1">Belongs to the nucleoside phosphorylase PpnP family.</text>
</comment>
<reference key="1">
    <citation type="submission" date="2006-05" db="EMBL/GenBank/DDBJ databases">
        <title>Complete sequence of chromosome 2 of Burkholderia cenocepacia AU 1054.</title>
        <authorList>
            <consortium name="US DOE Joint Genome Institute"/>
            <person name="Copeland A."/>
            <person name="Lucas S."/>
            <person name="Lapidus A."/>
            <person name="Barry K."/>
            <person name="Detter J.C."/>
            <person name="Glavina del Rio T."/>
            <person name="Hammon N."/>
            <person name="Israni S."/>
            <person name="Dalin E."/>
            <person name="Tice H."/>
            <person name="Pitluck S."/>
            <person name="Chain P."/>
            <person name="Malfatti S."/>
            <person name="Shin M."/>
            <person name="Vergez L."/>
            <person name="Schmutz J."/>
            <person name="Larimer F."/>
            <person name="Land M."/>
            <person name="Hauser L."/>
            <person name="Kyrpides N."/>
            <person name="Lykidis A."/>
            <person name="LiPuma J.J."/>
            <person name="Konstantinidis K."/>
            <person name="Tiedje J.M."/>
            <person name="Richardson P."/>
        </authorList>
    </citation>
    <scope>NUCLEOTIDE SEQUENCE [LARGE SCALE GENOMIC DNA]</scope>
    <source>
        <strain>AU 1054</strain>
    </source>
</reference>
<name>PPNP_BURO1</name>
<sequence>MTSATQFDNVSVVKRANVYFDGKCVSHTVLFPDGTRKTLGVILPCALNFGTDAPELMEVQAGKCRVKLDGSSEWQTYGAGESFSVPGKSRFDIEVLETLDYVCSYL</sequence>
<keyword id="KW-0328">Glycosyltransferase</keyword>
<keyword id="KW-0808">Transferase</keyword>
<accession>Q1BNU0</accession>
<dbReference type="EC" id="2.4.2.1" evidence="1"/>
<dbReference type="EC" id="2.4.2.2" evidence="1"/>
<dbReference type="EMBL" id="CP000379">
    <property type="protein sequence ID" value="ABF78715.1"/>
    <property type="molecule type" value="Genomic_DNA"/>
</dbReference>
<dbReference type="SMR" id="Q1BNU0"/>
<dbReference type="HOGENOM" id="CLU_157874_1_0_4"/>
<dbReference type="GO" id="GO:0005829">
    <property type="term" value="C:cytosol"/>
    <property type="evidence" value="ECO:0007669"/>
    <property type="project" value="TreeGrafter"/>
</dbReference>
<dbReference type="GO" id="GO:0047975">
    <property type="term" value="F:guanosine phosphorylase activity"/>
    <property type="evidence" value="ECO:0007669"/>
    <property type="project" value="UniProtKB-EC"/>
</dbReference>
<dbReference type="GO" id="GO:0004731">
    <property type="term" value="F:purine-nucleoside phosphorylase activity"/>
    <property type="evidence" value="ECO:0007669"/>
    <property type="project" value="UniProtKB-UniRule"/>
</dbReference>
<dbReference type="GO" id="GO:0009032">
    <property type="term" value="F:thymidine phosphorylase activity"/>
    <property type="evidence" value="ECO:0007669"/>
    <property type="project" value="UniProtKB-EC"/>
</dbReference>
<dbReference type="GO" id="GO:0004850">
    <property type="term" value="F:uridine phosphorylase activity"/>
    <property type="evidence" value="ECO:0007669"/>
    <property type="project" value="UniProtKB-EC"/>
</dbReference>
<dbReference type="CDD" id="cd20296">
    <property type="entry name" value="cupin_PpnP-like"/>
    <property type="match status" value="1"/>
</dbReference>
<dbReference type="Gene3D" id="2.60.120.10">
    <property type="entry name" value="Jelly Rolls"/>
    <property type="match status" value="1"/>
</dbReference>
<dbReference type="HAMAP" id="MF_01537">
    <property type="entry name" value="Nucleos_phosphorylase_PpnP"/>
    <property type="match status" value="1"/>
</dbReference>
<dbReference type="InterPro" id="IPR009664">
    <property type="entry name" value="Ppnp"/>
</dbReference>
<dbReference type="InterPro" id="IPR014710">
    <property type="entry name" value="RmlC-like_jellyroll"/>
</dbReference>
<dbReference type="InterPro" id="IPR011051">
    <property type="entry name" value="RmlC_Cupin_sf"/>
</dbReference>
<dbReference type="PANTHER" id="PTHR36540">
    <property type="entry name" value="PYRIMIDINE/PURINE NUCLEOSIDE PHOSPHORYLASE"/>
    <property type="match status" value="1"/>
</dbReference>
<dbReference type="PANTHER" id="PTHR36540:SF1">
    <property type="entry name" value="PYRIMIDINE_PURINE NUCLEOSIDE PHOSPHORYLASE"/>
    <property type="match status" value="1"/>
</dbReference>
<dbReference type="Pfam" id="PF06865">
    <property type="entry name" value="Ppnp"/>
    <property type="match status" value="1"/>
</dbReference>
<dbReference type="SUPFAM" id="SSF51182">
    <property type="entry name" value="RmlC-like cupins"/>
    <property type="match status" value="1"/>
</dbReference>
<proteinExistence type="inferred from homology"/>
<protein>
    <recommendedName>
        <fullName evidence="1">Pyrimidine/purine nucleoside phosphorylase</fullName>
        <ecNumber evidence="1">2.4.2.1</ecNumber>
        <ecNumber evidence="1">2.4.2.2</ecNumber>
    </recommendedName>
    <alternativeName>
        <fullName evidence="1">Adenosine phosphorylase</fullName>
    </alternativeName>
    <alternativeName>
        <fullName evidence="1">Cytidine phosphorylase</fullName>
    </alternativeName>
    <alternativeName>
        <fullName evidence="1">Guanosine phosphorylase</fullName>
    </alternativeName>
    <alternativeName>
        <fullName evidence="1">Inosine phosphorylase</fullName>
    </alternativeName>
    <alternativeName>
        <fullName evidence="1">Thymidine phosphorylase</fullName>
    </alternativeName>
    <alternativeName>
        <fullName evidence="1">Uridine phosphorylase</fullName>
    </alternativeName>
    <alternativeName>
        <fullName evidence="1">Xanthosine phosphorylase</fullName>
    </alternativeName>
</protein>
<feature type="chain" id="PRO_0000292782" description="Pyrimidine/purine nucleoside phosphorylase">
    <location>
        <begin position="1"/>
        <end position="106"/>
    </location>
</feature>
<gene>
    <name evidence="1" type="primary">ppnP</name>
    <name type="ordered locus">Bcen_3823</name>
</gene>
<organism>
    <name type="scientific">Burkholderia orbicola (strain AU 1054)</name>
    <dbReference type="NCBI Taxonomy" id="331271"/>
    <lineage>
        <taxon>Bacteria</taxon>
        <taxon>Pseudomonadati</taxon>
        <taxon>Pseudomonadota</taxon>
        <taxon>Betaproteobacteria</taxon>
        <taxon>Burkholderiales</taxon>
        <taxon>Burkholderiaceae</taxon>
        <taxon>Burkholderia</taxon>
        <taxon>Burkholderia cepacia complex</taxon>
        <taxon>Burkholderia orbicola</taxon>
    </lineage>
</organism>
<evidence type="ECO:0000255" key="1">
    <source>
        <dbReference type="HAMAP-Rule" id="MF_01537"/>
    </source>
</evidence>